<organism>
    <name type="scientific">Malacoplasma penetrans (strain HF-2)</name>
    <name type="common">Mycoplasma penetrans</name>
    <dbReference type="NCBI Taxonomy" id="272633"/>
    <lineage>
        <taxon>Bacteria</taxon>
        <taxon>Bacillati</taxon>
        <taxon>Mycoplasmatota</taxon>
        <taxon>Mycoplasmoidales</taxon>
        <taxon>Mycoplasmoidaceae</taxon>
        <taxon>Malacoplasma</taxon>
    </lineage>
</organism>
<feature type="chain" id="PRO_0000062147" description="Large ribosomal subunit protein uL16">
    <location>
        <begin position="1"/>
        <end position="140"/>
    </location>
</feature>
<proteinExistence type="inferred from homology"/>
<sequence>MLEPKRTKYRRPHKVSYEGKAKGNKYVAFGEFGLMATNGAWISNRQIESARIAISKALGKTGKMWIRIFPHLSLTKKPLEVRMGSGKGSPEKWVAVVKAGTVMFEVANIPEEVARTALKNAGNKLSVNWKIVKKGEIAHD</sequence>
<comment type="function">
    <text evidence="1">Binds 23S rRNA and is also seen to make contacts with the A and possibly P site tRNAs.</text>
</comment>
<comment type="subunit">
    <text evidence="1">Part of the 50S ribosomal subunit.</text>
</comment>
<comment type="similarity">
    <text evidence="1">Belongs to the universal ribosomal protein uL16 family.</text>
</comment>
<dbReference type="EMBL" id="BA000026">
    <property type="protein sequence ID" value="BAC44797.1"/>
    <property type="molecule type" value="Genomic_DNA"/>
</dbReference>
<dbReference type="RefSeq" id="WP_011077825.1">
    <property type="nucleotide sequence ID" value="NC_004432.1"/>
</dbReference>
<dbReference type="SMR" id="Q8EUB9"/>
<dbReference type="FunCoup" id="Q8EUB9">
    <property type="interactions" value="239"/>
</dbReference>
<dbReference type="STRING" id="272633.gene:10732131"/>
<dbReference type="KEGG" id="mpe:MYPE10110"/>
<dbReference type="eggNOG" id="COG0197">
    <property type="taxonomic scope" value="Bacteria"/>
</dbReference>
<dbReference type="HOGENOM" id="CLU_078858_2_1_14"/>
<dbReference type="InParanoid" id="Q8EUB9"/>
<dbReference type="Proteomes" id="UP000002522">
    <property type="component" value="Chromosome"/>
</dbReference>
<dbReference type="GO" id="GO:0022625">
    <property type="term" value="C:cytosolic large ribosomal subunit"/>
    <property type="evidence" value="ECO:0007669"/>
    <property type="project" value="TreeGrafter"/>
</dbReference>
<dbReference type="GO" id="GO:0019843">
    <property type="term" value="F:rRNA binding"/>
    <property type="evidence" value="ECO:0007669"/>
    <property type="project" value="UniProtKB-UniRule"/>
</dbReference>
<dbReference type="GO" id="GO:0003735">
    <property type="term" value="F:structural constituent of ribosome"/>
    <property type="evidence" value="ECO:0007669"/>
    <property type="project" value="InterPro"/>
</dbReference>
<dbReference type="GO" id="GO:0000049">
    <property type="term" value="F:tRNA binding"/>
    <property type="evidence" value="ECO:0007669"/>
    <property type="project" value="UniProtKB-KW"/>
</dbReference>
<dbReference type="GO" id="GO:0006412">
    <property type="term" value="P:translation"/>
    <property type="evidence" value="ECO:0007669"/>
    <property type="project" value="UniProtKB-UniRule"/>
</dbReference>
<dbReference type="CDD" id="cd01433">
    <property type="entry name" value="Ribosomal_L16_L10e"/>
    <property type="match status" value="1"/>
</dbReference>
<dbReference type="FunFam" id="3.90.1170.10:FF:000001">
    <property type="entry name" value="50S ribosomal protein L16"/>
    <property type="match status" value="1"/>
</dbReference>
<dbReference type="Gene3D" id="3.90.1170.10">
    <property type="entry name" value="Ribosomal protein L10e/L16"/>
    <property type="match status" value="1"/>
</dbReference>
<dbReference type="HAMAP" id="MF_01342">
    <property type="entry name" value="Ribosomal_uL16"/>
    <property type="match status" value="1"/>
</dbReference>
<dbReference type="InterPro" id="IPR047873">
    <property type="entry name" value="Ribosomal_uL16"/>
</dbReference>
<dbReference type="InterPro" id="IPR000114">
    <property type="entry name" value="Ribosomal_uL16_bact-type"/>
</dbReference>
<dbReference type="InterPro" id="IPR020798">
    <property type="entry name" value="Ribosomal_uL16_CS"/>
</dbReference>
<dbReference type="InterPro" id="IPR016180">
    <property type="entry name" value="Ribosomal_uL16_dom"/>
</dbReference>
<dbReference type="InterPro" id="IPR036920">
    <property type="entry name" value="Ribosomal_uL16_sf"/>
</dbReference>
<dbReference type="NCBIfam" id="TIGR01164">
    <property type="entry name" value="rplP_bact"/>
    <property type="match status" value="1"/>
</dbReference>
<dbReference type="PANTHER" id="PTHR12220">
    <property type="entry name" value="50S/60S RIBOSOMAL PROTEIN L16"/>
    <property type="match status" value="1"/>
</dbReference>
<dbReference type="PANTHER" id="PTHR12220:SF13">
    <property type="entry name" value="LARGE RIBOSOMAL SUBUNIT PROTEIN UL16M"/>
    <property type="match status" value="1"/>
</dbReference>
<dbReference type="Pfam" id="PF00252">
    <property type="entry name" value="Ribosomal_L16"/>
    <property type="match status" value="1"/>
</dbReference>
<dbReference type="PRINTS" id="PR00060">
    <property type="entry name" value="RIBOSOMALL16"/>
</dbReference>
<dbReference type="SUPFAM" id="SSF54686">
    <property type="entry name" value="Ribosomal protein L16p/L10e"/>
    <property type="match status" value="1"/>
</dbReference>
<dbReference type="PROSITE" id="PS00586">
    <property type="entry name" value="RIBOSOMAL_L16_1"/>
    <property type="match status" value="1"/>
</dbReference>
<dbReference type="PROSITE" id="PS00701">
    <property type="entry name" value="RIBOSOMAL_L16_2"/>
    <property type="match status" value="1"/>
</dbReference>
<accession>Q8EUB9</accession>
<protein>
    <recommendedName>
        <fullName evidence="1">Large ribosomal subunit protein uL16</fullName>
    </recommendedName>
    <alternativeName>
        <fullName evidence="2">50S ribosomal protein L16</fullName>
    </alternativeName>
</protein>
<gene>
    <name evidence="1" type="primary">rplP</name>
    <name type="ordered locus">MYPE10110</name>
</gene>
<reference key="1">
    <citation type="journal article" date="2002" name="Nucleic Acids Res.">
        <title>The complete genomic sequence of Mycoplasma penetrans, an intracellular bacterial pathogen in humans.</title>
        <authorList>
            <person name="Sasaki Y."/>
            <person name="Ishikawa J."/>
            <person name="Yamashita A."/>
            <person name="Oshima K."/>
            <person name="Kenri T."/>
            <person name="Furuya K."/>
            <person name="Yoshino C."/>
            <person name="Horino A."/>
            <person name="Shiba T."/>
            <person name="Sasaki T."/>
            <person name="Hattori M."/>
        </authorList>
    </citation>
    <scope>NUCLEOTIDE SEQUENCE [LARGE SCALE GENOMIC DNA]</scope>
    <source>
        <strain>HF-2</strain>
    </source>
</reference>
<evidence type="ECO:0000255" key="1">
    <source>
        <dbReference type="HAMAP-Rule" id="MF_01342"/>
    </source>
</evidence>
<evidence type="ECO:0000305" key="2"/>
<keyword id="KW-1185">Reference proteome</keyword>
<keyword id="KW-0687">Ribonucleoprotein</keyword>
<keyword id="KW-0689">Ribosomal protein</keyword>
<keyword id="KW-0694">RNA-binding</keyword>
<keyword id="KW-0699">rRNA-binding</keyword>
<keyword id="KW-0820">tRNA-binding</keyword>
<name>RL16_MALP2</name>